<comment type="miscellaneous">
    <text evidence="1">Partially overlaps CCT2.</text>
</comment>
<comment type="caution">
    <text evidence="2">Product of a dubious gene prediction unlikely to encode a functional protein. Because of that it is not part of the S.cerevisiae S288c complete/reference proteome set.</text>
</comment>
<sequence>MFTNTLAAGLSSGIDFRIVAPSFVTMQVLLDALCNNLSIPFGPNVLFTKSPTAMAPTNADKRAFSALSSVTWSPNICTLILNLLSFVRLTLLAYLMATFHPLFYCSALVF</sequence>
<accession>A0A023PYI2</accession>
<feature type="chain" id="PRO_0000431039" description="Putative uncharacterized protein YIL142C-A">
    <location>
        <begin position="1"/>
        <end position="110"/>
    </location>
</feature>
<organism>
    <name type="scientific">Saccharomyces cerevisiae (strain ATCC 204508 / S288c)</name>
    <name type="common">Baker's yeast</name>
    <dbReference type="NCBI Taxonomy" id="559292"/>
    <lineage>
        <taxon>Eukaryota</taxon>
        <taxon>Fungi</taxon>
        <taxon>Dikarya</taxon>
        <taxon>Ascomycota</taxon>
        <taxon>Saccharomycotina</taxon>
        <taxon>Saccharomycetes</taxon>
        <taxon>Saccharomycetales</taxon>
        <taxon>Saccharomycetaceae</taxon>
        <taxon>Saccharomyces</taxon>
    </lineage>
</organism>
<gene>
    <name evidence="3" type="ordered locus">YIL142C-A</name>
</gene>
<dbReference type="EMBL" id="KJ412275">
    <property type="protein sequence ID" value="AHX39318.1"/>
    <property type="molecule type" value="Genomic_DNA"/>
</dbReference>
<dbReference type="PaxDb" id="4932-YIL142C-A"/>
<dbReference type="EnsemblFungi" id="YIL142C-A_mRNA">
    <property type="protein sequence ID" value="YIL142C-A"/>
    <property type="gene ID" value="YIL142C-A"/>
</dbReference>
<dbReference type="AGR" id="SGD:S000028796"/>
<dbReference type="SGD" id="S000028796">
    <property type="gene designation" value="YIL142C-A"/>
</dbReference>
<dbReference type="eggNOG" id="ENOG502SBT0">
    <property type="taxonomic scope" value="Eukaryota"/>
</dbReference>
<dbReference type="HOGENOM" id="CLU_173517_0_0_1"/>
<evidence type="ECO:0000305" key="1"/>
<evidence type="ECO:0000305" key="2">
    <source>
    </source>
</evidence>
<evidence type="ECO:0000312" key="3">
    <source>
        <dbReference type="SGD" id="S000028796"/>
    </source>
</evidence>
<reference key="1">
    <citation type="journal article" date="1997" name="Nature">
        <title>The nucleotide sequence of Saccharomyces cerevisiae chromosome IX.</title>
        <authorList>
            <person name="Churcher C.M."/>
            <person name="Bowman S."/>
            <person name="Badcock K."/>
            <person name="Bankier A.T."/>
            <person name="Brown D."/>
            <person name="Chillingworth T."/>
            <person name="Connor R."/>
            <person name="Devlin K."/>
            <person name="Gentles S."/>
            <person name="Hamlin N."/>
            <person name="Harris D.E."/>
            <person name="Horsnell T."/>
            <person name="Hunt S."/>
            <person name="Jagels K."/>
            <person name="Jones M."/>
            <person name="Lye G."/>
            <person name="Moule S."/>
            <person name="Odell C."/>
            <person name="Pearson D."/>
            <person name="Rajandream M.A."/>
            <person name="Rice P."/>
            <person name="Rowley N."/>
            <person name="Skelton J."/>
            <person name="Smith V."/>
            <person name="Walsh S.V."/>
            <person name="Whitehead S."/>
            <person name="Barrell B.G."/>
        </authorList>
    </citation>
    <scope>NUCLEOTIDE SEQUENCE [LARGE SCALE GENOMIC DNA]</scope>
    <source>
        <strain>ATCC 204508 / S288c</strain>
    </source>
</reference>
<reference key="2">
    <citation type="journal article" date="2014" name="G3 (Bethesda)">
        <title>The reference genome sequence of Saccharomyces cerevisiae: Then and now.</title>
        <authorList>
            <person name="Engel S.R."/>
            <person name="Dietrich F.S."/>
            <person name="Fisk D.G."/>
            <person name="Binkley G."/>
            <person name="Balakrishnan R."/>
            <person name="Costanzo M.C."/>
            <person name="Dwight S.S."/>
            <person name="Hitz B.C."/>
            <person name="Karra K."/>
            <person name="Nash R.S."/>
            <person name="Weng S."/>
            <person name="Wong E.D."/>
            <person name="Lloyd P."/>
            <person name="Skrzypek M.S."/>
            <person name="Miyasato S.R."/>
            <person name="Simison M."/>
            <person name="Cherry J.M."/>
        </authorList>
    </citation>
    <scope>GENOME REANNOTATION</scope>
    <source>
        <strain>ATCC 204508 / S288c</strain>
    </source>
</reference>
<name>YI142_YEAST</name>
<proteinExistence type="uncertain"/>
<protein>
    <recommendedName>
        <fullName evidence="1">Putative uncharacterized protein YIL142C-A</fullName>
    </recommendedName>
</protein>